<sequence>MKKNKLVLMLLMAAFMMIAAACGNAGESKKSNSDSAKGEEKASGSLTISGSSAMQPLVLAAAEKFMEENPDADIQVQAGGSGTGLSQVSEGAVQIGNSDVFAEEKEGIDAKALVDHQVAVVGMAAAVNPDAGVKDISKDELKKIFTGKIKNWKELGGKDQKITLVNRPDSSGTRATFVKYALDGAEPAEGITEDSSNTVKKIIADTPGAIGYLAFSYLTDDKVTALSIDGVKPEAKNVATGEYPIWAYQHSYTKGEATGLAKEFLDYLKSEDIQKSIVTDQGYIPVTDMKVTRDANGKQS</sequence>
<organism>
    <name type="scientific">Bacillus subtilis (strain 168)</name>
    <dbReference type="NCBI Taxonomy" id="224308"/>
    <lineage>
        <taxon>Bacteria</taxon>
        <taxon>Bacillati</taxon>
        <taxon>Bacillota</taxon>
        <taxon>Bacilli</taxon>
        <taxon>Bacillales</taxon>
        <taxon>Bacillaceae</taxon>
        <taxon>Bacillus</taxon>
    </lineage>
</organism>
<feature type="signal peptide" evidence="2">
    <location>
        <begin position="1"/>
        <end position="21"/>
    </location>
</feature>
<feature type="chain" id="PRO_0000031862" description="Phosphate-binding protein PstS">
    <location>
        <begin position="22"/>
        <end position="300"/>
    </location>
</feature>
<feature type="region of interest" description="Disordered" evidence="3">
    <location>
        <begin position="27"/>
        <end position="47"/>
    </location>
</feature>
<feature type="compositionally biased region" description="Basic and acidic residues" evidence="3">
    <location>
        <begin position="27"/>
        <end position="42"/>
    </location>
</feature>
<feature type="lipid moiety-binding region" description="N-palmitoyl cysteine" evidence="4">
    <location>
        <position position="22"/>
    </location>
</feature>
<feature type="lipid moiety-binding region" description="S-diacylglycerol cysteine" evidence="4">
    <location>
        <position position="22"/>
    </location>
</feature>
<name>PSTS_BACSU</name>
<evidence type="ECO:0000250" key="1"/>
<evidence type="ECO:0000255" key="2">
    <source>
        <dbReference type="PROSITE-ProRule" id="PRU00303"/>
    </source>
</evidence>
<evidence type="ECO:0000256" key="3">
    <source>
        <dbReference type="SAM" id="MobiDB-lite"/>
    </source>
</evidence>
<evidence type="ECO:0000305" key="4"/>
<comment type="function">
    <text evidence="1">Part of the ABC transporter complex PstSACB involved in phosphate import.</text>
</comment>
<comment type="subunit">
    <text evidence="4">The complex is composed of two ATP-binding proteins (PstB), two transmembrane proteins (PstC and PstA) and a solute-binding protein (PstS).</text>
</comment>
<comment type="subcellular location">
    <subcellularLocation>
        <location evidence="4">Cell membrane</location>
        <topology evidence="4">Lipid-anchor</topology>
    </subcellularLocation>
</comment>
<comment type="similarity">
    <text evidence="4">Belongs to the PstS family.</text>
</comment>
<proteinExistence type="inferred from homology"/>
<accession>P46338</accession>
<protein>
    <recommendedName>
        <fullName>Phosphate-binding protein PstS</fullName>
        <shortName>PBP</shortName>
    </recommendedName>
</protein>
<keyword id="KW-1003">Cell membrane</keyword>
<keyword id="KW-0449">Lipoprotein</keyword>
<keyword id="KW-0472">Membrane</keyword>
<keyword id="KW-0564">Palmitate</keyword>
<keyword id="KW-0592">Phosphate transport</keyword>
<keyword id="KW-1185">Reference proteome</keyword>
<keyword id="KW-0732">Signal</keyword>
<keyword id="KW-0813">Transport</keyword>
<reference key="1">
    <citation type="journal article" date="1996" name="Microbiology">
        <title>A Bacillus subtilis gene cluster similar to the Escherichia coli phosphate-specific transport (pst) operon: evidence for a tandemly arranged pstB gene.</title>
        <authorList>
            <person name="Takemaru K."/>
            <person name="Mizuno M."/>
            <person name="Kobayashi Y."/>
        </authorList>
    </citation>
    <scope>NUCLEOTIDE SEQUENCE [GENOMIC DNA]</scope>
    <source>
        <strain>168 / JH642</strain>
    </source>
</reference>
<reference key="2">
    <citation type="journal article" date="1996" name="Microbiology">
        <title>Systematic sequencing of the 283 kb 210 degrees-232 degrees region of the Bacillus subtilis genome containing the skin element and many sporulation genes.</title>
        <authorList>
            <person name="Mizuno M."/>
            <person name="Masuda S."/>
            <person name="Takemaru K."/>
            <person name="Hosono S."/>
            <person name="Sato T."/>
            <person name="Takeuchi M."/>
            <person name="Kobayashi Y."/>
        </authorList>
    </citation>
    <scope>NUCLEOTIDE SEQUENCE [GENOMIC DNA]</scope>
    <source>
        <strain>168 / JH642</strain>
    </source>
</reference>
<reference key="3">
    <citation type="journal article" date="1997" name="Nature">
        <title>The complete genome sequence of the Gram-positive bacterium Bacillus subtilis.</title>
        <authorList>
            <person name="Kunst F."/>
            <person name="Ogasawara N."/>
            <person name="Moszer I."/>
            <person name="Albertini A.M."/>
            <person name="Alloni G."/>
            <person name="Azevedo V."/>
            <person name="Bertero M.G."/>
            <person name="Bessieres P."/>
            <person name="Bolotin A."/>
            <person name="Borchert S."/>
            <person name="Borriss R."/>
            <person name="Boursier L."/>
            <person name="Brans A."/>
            <person name="Braun M."/>
            <person name="Brignell S.C."/>
            <person name="Bron S."/>
            <person name="Brouillet S."/>
            <person name="Bruschi C.V."/>
            <person name="Caldwell B."/>
            <person name="Capuano V."/>
            <person name="Carter N.M."/>
            <person name="Choi S.-K."/>
            <person name="Codani J.-J."/>
            <person name="Connerton I.F."/>
            <person name="Cummings N.J."/>
            <person name="Daniel R.A."/>
            <person name="Denizot F."/>
            <person name="Devine K.M."/>
            <person name="Duesterhoeft A."/>
            <person name="Ehrlich S.D."/>
            <person name="Emmerson P.T."/>
            <person name="Entian K.-D."/>
            <person name="Errington J."/>
            <person name="Fabret C."/>
            <person name="Ferrari E."/>
            <person name="Foulger D."/>
            <person name="Fritz C."/>
            <person name="Fujita M."/>
            <person name="Fujita Y."/>
            <person name="Fuma S."/>
            <person name="Galizzi A."/>
            <person name="Galleron N."/>
            <person name="Ghim S.-Y."/>
            <person name="Glaser P."/>
            <person name="Goffeau A."/>
            <person name="Golightly E.J."/>
            <person name="Grandi G."/>
            <person name="Guiseppi G."/>
            <person name="Guy B.J."/>
            <person name="Haga K."/>
            <person name="Haiech J."/>
            <person name="Harwood C.R."/>
            <person name="Henaut A."/>
            <person name="Hilbert H."/>
            <person name="Holsappel S."/>
            <person name="Hosono S."/>
            <person name="Hullo M.-F."/>
            <person name="Itaya M."/>
            <person name="Jones L.-M."/>
            <person name="Joris B."/>
            <person name="Karamata D."/>
            <person name="Kasahara Y."/>
            <person name="Klaerr-Blanchard M."/>
            <person name="Klein C."/>
            <person name="Kobayashi Y."/>
            <person name="Koetter P."/>
            <person name="Koningstein G."/>
            <person name="Krogh S."/>
            <person name="Kumano M."/>
            <person name="Kurita K."/>
            <person name="Lapidus A."/>
            <person name="Lardinois S."/>
            <person name="Lauber J."/>
            <person name="Lazarevic V."/>
            <person name="Lee S.-M."/>
            <person name="Levine A."/>
            <person name="Liu H."/>
            <person name="Masuda S."/>
            <person name="Mauel C."/>
            <person name="Medigue C."/>
            <person name="Medina N."/>
            <person name="Mellado R.P."/>
            <person name="Mizuno M."/>
            <person name="Moestl D."/>
            <person name="Nakai S."/>
            <person name="Noback M."/>
            <person name="Noone D."/>
            <person name="O'Reilly M."/>
            <person name="Ogawa K."/>
            <person name="Ogiwara A."/>
            <person name="Oudega B."/>
            <person name="Park S.-H."/>
            <person name="Parro V."/>
            <person name="Pohl T.M."/>
            <person name="Portetelle D."/>
            <person name="Porwollik S."/>
            <person name="Prescott A.M."/>
            <person name="Presecan E."/>
            <person name="Pujic P."/>
            <person name="Purnelle B."/>
            <person name="Rapoport G."/>
            <person name="Rey M."/>
            <person name="Reynolds S."/>
            <person name="Rieger M."/>
            <person name="Rivolta C."/>
            <person name="Rocha E."/>
            <person name="Roche B."/>
            <person name="Rose M."/>
            <person name="Sadaie Y."/>
            <person name="Sato T."/>
            <person name="Scanlan E."/>
            <person name="Schleich S."/>
            <person name="Schroeter R."/>
            <person name="Scoffone F."/>
            <person name="Sekiguchi J."/>
            <person name="Sekowska A."/>
            <person name="Seror S.J."/>
            <person name="Serror P."/>
            <person name="Shin B.-S."/>
            <person name="Soldo B."/>
            <person name="Sorokin A."/>
            <person name="Tacconi E."/>
            <person name="Takagi T."/>
            <person name="Takahashi H."/>
            <person name="Takemaru K."/>
            <person name="Takeuchi M."/>
            <person name="Tamakoshi A."/>
            <person name="Tanaka T."/>
            <person name="Terpstra P."/>
            <person name="Tognoni A."/>
            <person name="Tosato V."/>
            <person name="Uchiyama S."/>
            <person name="Vandenbol M."/>
            <person name="Vannier F."/>
            <person name="Vassarotti A."/>
            <person name="Viari A."/>
            <person name="Wambutt R."/>
            <person name="Wedler E."/>
            <person name="Wedler H."/>
            <person name="Weitzenegger T."/>
            <person name="Winters P."/>
            <person name="Wipat A."/>
            <person name="Yamamoto H."/>
            <person name="Yamane K."/>
            <person name="Yasumoto K."/>
            <person name="Yata K."/>
            <person name="Yoshida K."/>
            <person name="Yoshikawa H.-F."/>
            <person name="Zumstein E."/>
            <person name="Yoshikawa H."/>
            <person name="Danchin A."/>
        </authorList>
    </citation>
    <scope>NUCLEOTIDE SEQUENCE [LARGE SCALE GENOMIC DNA]</scope>
    <source>
        <strain>168</strain>
    </source>
</reference>
<gene>
    <name type="primary">pstS</name>
    <name type="synonym">yqgG</name>
    <name type="synonym">yzmB</name>
    <name type="ordered locus">BSU24990</name>
</gene>
<dbReference type="EMBL" id="D58414">
    <property type="protein sequence ID" value="BAA09581.1"/>
    <property type="molecule type" value="Genomic_DNA"/>
</dbReference>
<dbReference type="EMBL" id="D84432">
    <property type="protein sequence ID" value="BAA12510.1"/>
    <property type="molecule type" value="Genomic_DNA"/>
</dbReference>
<dbReference type="EMBL" id="AL009126">
    <property type="protein sequence ID" value="CAB14429.1"/>
    <property type="molecule type" value="Genomic_DNA"/>
</dbReference>
<dbReference type="PIR" id="A69956">
    <property type="entry name" value="A69956"/>
</dbReference>
<dbReference type="RefSeq" id="NP_390378.1">
    <property type="nucleotide sequence ID" value="NC_000964.3"/>
</dbReference>
<dbReference type="RefSeq" id="WP_004398774.1">
    <property type="nucleotide sequence ID" value="NZ_OZ025638.1"/>
</dbReference>
<dbReference type="SMR" id="P46338"/>
<dbReference type="FunCoup" id="P46338">
    <property type="interactions" value="474"/>
</dbReference>
<dbReference type="STRING" id="224308.BSU24990"/>
<dbReference type="PaxDb" id="224308-BSU24990"/>
<dbReference type="EnsemblBacteria" id="CAB14429">
    <property type="protein sequence ID" value="CAB14429"/>
    <property type="gene ID" value="BSU_24990"/>
</dbReference>
<dbReference type="GeneID" id="938197"/>
<dbReference type="KEGG" id="bsu:BSU24990"/>
<dbReference type="PATRIC" id="fig|224308.179.peg.2718"/>
<dbReference type="eggNOG" id="COG0226">
    <property type="taxonomic scope" value="Bacteria"/>
</dbReference>
<dbReference type="InParanoid" id="P46338"/>
<dbReference type="OrthoDB" id="9790048at2"/>
<dbReference type="PhylomeDB" id="P46338"/>
<dbReference type="BioCyc" id="BSUB:BSU24990-MONOMER"/>
<dbReference type="Proteomes" id="UP000001570">
    <property type="component" value="Chromosome"/>
</dbReference>
<dbReference type="GO" id="GO:0005886">
    <property type="term" value="C:plasma membrane"/>
    <property type="evidence" value="ECO:0007669"/>
    <property type="project" value="UniProtKB-SubCell"/>
</dbReference>
<dbReference type="GO" id="GO:0042301">
    <property type="term" value="F:phosphate ion binding"/>
    <property type="evidence" value="ECO:0007669"/>
    <property type="project" value="InterPro"/>
</dbReference>
<dbReference type="GO" id="GO:0006817">
    <property type="term" value="P:phosphate ion transport"/>
    <property type="evidence" value="ECO:0007669"/>
    <property type="project" value="UniProtKB-KW"/>
</dbReference>
<dbReference type="CDD" id="cd13653">
    <property type="entry name" value="PBP2_phosphate_like_1"/>
    <property type="match status" value="1"/>
</dbReference>
<dbReference type="Gene3D" id="3.40.190.10">
    <property type="entry name" value="Periplasmic binding protein-like II"/>
    <property type="match status" value="2"/>
</dbReference>
<dbReference type="InterPro" id="IPR024370">
    <property type="entry name" value="PBP_domain"/>
</dbReference>
<dbReference type="InterPro" id="IPR011862">
    <property type="entry name" value="Phos-bd"/>
</dbReference>
<dbReference type="InterPro" id="IPR050811">
    <property type="entry name" value="Phosphate_ABC_transporter"/>
</dbReference>
<dbReference type="NCBIfam" id="TIGR02136">
    <property type="entry name" value="ptsS_2"/>
    <property type="match status" value="1"/>
</dbReference>
<dbReference type="PANTHER" id="PTHR30570">
    <property type="entry name" value="PERIPLASMIC PHOSPHATE BINDING COMPONENT OF PHOSPHATE ABC TRANSPORTER"/>
    <property type="match status" value="1"/>
</dbReference>
<dbReference type="PANTHER" id="PTHR30570:SF4">
    <property type="entry name" value="PHOSPHATE-BINDING PROTEIN PSTS 1"/>
    <property type="match status" value="1"/>
</dbReference>
<dbReference type="Pfam" id="PF12849">
    <property type="entry name" value="PBP_like_2"/>
    <property type="match status" value="1"/>
</dbReference>
<dbReference type="SUPFAM" id="SSF53850">
    <property type="entry name" value="Periplasmic binding protein-like II"/>
    <property type="match status" value="1"/>
</dbReference>
<dbReference type="PROSITE" id="PS51257">
    <property type="entry name" value="PROKAR_LIPOPROTEIN"/>
    <property type="match status" value="1"/>
</dbReference>